<feature type="chain" id="PRO_1000007190" description="Large ribosomal subunit protein bL28">
    <location>
        <begin position="1"/>
        <end position="77"/>
    </location>
</feature>
<feature type="region of interest" description="Disordered" evidence="2">
    <location>
        <begin position="1"/>
        <end position="25"/>
    </location>
</feature>
<comment type="similarity">
    <text evidence="1">Belongs to the bacterial ribosomal protein bL28 family.</text>
</comment>
<gene>
    <name evidence="1" type="primary">rpmB</name>
    <name type="ordered locus">BURPS1106A_0983</name>
</gene>
<accession>A3NSE3</accession>
<sequence length="77" mass="8761">MARVCQVTGKAPMSGNNVSHANNKTKRRFLPNLQNRRFWVESENRWVRLRVSNAGLRLIDKNGIDSVLADLRARGEA</sequence>
<evidence type="ECO:0000255" key="1">
    <source>
        <dbReference type="HAMAP-Rule" id="MF_00373"/>
    </source>
</evidence>
<evidence type="ECO:0000256" key="2">
    <source>
        <dbReference type="SAM" id="MobiDB-lite"/>
    </source>
</evidence>
<evidence type="ECO:0000305" key="3"/>
<organism>
    <name type="scientific">Burkholderia pseudomallei (strain 1106a)</name>
    <dbReference type="NCBI Taxonomy" id="357348"/>
    <lineage>
        <taxon>Bacteria</taxon>
        <taxon>Pseudomonadati</taxon>
        <taxon>Pseudomonadota</taxon>
        <taxon>Betaproteobacteria</taxon>
        <taxon>Burkholderiales</taxon>
        <taxon>Burkholderiaceae</taxon>
        <taxon>Burkholderia</taxon>
        <taxon>pseudomallei group</taxon>
    </lineage>
</organism>
<reference key="1">
    <citation type="journal article" date="2010" name="Genome Biol. Evol.">
        <title>Continuing evolution of Burkholderia mallei through genome reduction and large-scale rearrangements.</title>
        <authorList>
            <person name="Losada L."/>
            <person name="Ronning C.M."/>
            <person name="DeShazer D."/>
            <person name="Woods D."/>
            <person name="Fedorova N."/>
            <person name="Kim H.S."/>
            <person name="Shabalina S.A."/>
            <person name="Pearson T.R."/>
            <person name="Brinkac L."/>
            <person name="Tan P."/>
            <person name="Nandi T."/>
            <person name="Crabtree J."/>
            <person name="Badger J."/>
            <person name="Beckstrom-Sternberg S."/>
            <person name="Saqib M."/>
            <person name="Schutzer S.E."/>
            <person name="Keim P."/>
            <person name="Nierman W.C."/>
        </authorList>
    </citation>
    <scope>NUCLEOTIDE SEQUENCE [LARGE SCALE GENOMIC DNA]</scope>
    <source>
        <strain>1106a</strain>
    </source>
</reference>
<dbReference type="EMBL" id="CP000572">
    <property type="protein sequence ID" value="ABN89606.1"/>
    <property type="molecule type" value="Genomic_DNA"/>
</dbReference>
<dbReference type="RefSeq" id="WP_004186391.1">
    <property type="nucleotide sequence ID" value="NC_009076.1"/>
</dbReference>
<dbReference type="SMR" id="A3NSE3"/>
<dbReference type="GeneID" id="98107656"/>
<dbReference type="KEGG" id="bpl:BURPS1106A_0983"/>
<dbReference type="HOGENOM" id="CLU_064548_3_1_4"/>
<dbReference type="Proteomes" id="UP000006738">
    <property type="component" value="Chromosome I"/>
</dbReference>
<dbReference type="GO" id="GO:0022625">
    <property type="term" value="C:cytosolic large ribosomal subunit"/>
    <property type="evidence" value="ECO:0007669"/>
    <property type="project" value="TreeGrafter"/>
</dbReference>
<dbReference type="GO" id="GO:0003735">
    <property type="term" value="F:structural constituent of ribosome"/>
    <property type="evidence" value="ECO:0007669"/>
    <property type="project" value="InterPro"/>
</dbReference>
<dbReference type="GO" id="GO:0006412">
    <property type="term" value="P:translation"/>
    <property type="evidence" value="ECO:0007669"/>
    <property type="project" value="UniProtKB-UniRule"/>
</dbReference>
<dbReference type="FunFam" id="2.30.170.40:FF:000001">
    <property type="entry name" value="50S ribosomal protein L28"/>
    <property type="match status" value="1"/>
</dbReference>
<dbReference type="Gene3D" id="2.30.170.40">
    <property type="entry name" value="Ribosomal protein L28/L24"/>
    <property type="match status" value="1"/>
</dbReference>
<dbReference type="HAMAP" id="MF_00373">
    <property type="entry name" value="Ribosomal_bL28"/>
    <property type="match status" value="1"/>
</dbReference>
<dbReference type="InterPro" id="IPR026569">
    <property type="entry name" value="Ribosomal_bL28"/>
</dbReference>
<dbReference type="InterPro" id="IPR034704">
    <property type="entry name" value="Ribosomal_bL28/bL31-like_sf"/>
</dbReference>
<dbReference type="InterPro" id="IPR001383">
    <property type="entry name" value="Ribosomal_bL28_bact-type"/>
</dbReference>
<dbReference type="InterPro" id="IPR037147">
    <property type="entry name" value="Ribosomal_bL28_sf"/>
</dbReference>
<dbReference type="NCBIfam" id="TIGR00009">
    <property type="entry name" value="L28"/>
    <property type="match status" value="1"/>
</dbReference>
<dbReference type="PANTHER" id="PTHR13528">
    <property type="entry name" value="39S RIBOSOMAL PROTEIN L28, MITOCHONDRIAL"/>
    <property type="match status" value="1"/>
</dbReference>
<dbReference type="PANTHER" id="PTHR13528:SF2">
    <property type="entry name" value="LARGE RIBOSOMAL SUBUNIT PROTEIN BL28M"/>
    <property type="match status" value="1"/>
</dbReference>
<dbReference type="Pfam" id="PF00830">
    <property type="entry name" value="Ribosomal_L28"/>
    <property type="match status" value="1"/>
</dbReference>
<dbReference type="SUPFAM" id="SSF143800">
    <property type="entry name" value="L28p-like"/>
    <property type="match status" value="1"/>
</dbReference>
<keyword id="KW-0687">Ribonucleoprotein</keyword>
<keyword id="KW-0689">Ribosomal protein</keyword>
<name>RL28_BURP0</name>
<protein>
    <recommendedName>
        <fullName evidence="1">Large ribosomal subunit protein bL28</fullName>
    </recommendedName>
    <alternativeName>
        <fullName evidence="3">50S ribosomal protein L28</fullName>
    </alternativeName>
</protein>
<proteinExistence type="inferred from homology"/>